<sequence length="315" mass="34887">MRKRARIIYNPTSGKELFKRELPDALIKLEKAGYETSAYATEKIGDATLEAERAMHENYDVLIAAGGDGTLNEVVNGIAEKPNRPKLGVIPMGTVNDFGRALHIPNDIMGALDVIIEGHSTKVDIGKMNNRYFINLAAGGQLTQVSYETPSKLKSIVGPFAYYIKGFEMLPQMKAVDLRIEYDGNVFQGEALLFFLGLTNSMAGFEKLVPDAKLDDGYFTLIIVEKSNLAELGHIMTLASRGEHTKHPKVIYEKAKAINISSFTDLQLNVDGEYGGKLPANFLNLERHIDVFAPNDIVNEELINNDHVDDNLIEE</sequence>
<comment type="function">
    <text evidence="1">Catalyzes the phosphorylation of diacylglycerol (DAG) into phosphatidic acid. Is a key enzyme involved in the production of lipoteichoic acid by reintroducing DAG formed from the breakdown of membrane phospholipids into the phosphatidylglycerol biosynthetic pathway.</text>
</comment>
<comment type="catalytic activity">
    <reaction evidence="1">
        <text>a 1,2-diacyl-sn-glycerol + ATP = a 1,2-diacyl-sn-glycero-3-phosphate + ADP + H(+)</text>
        <dbReference type="Rhea" id="RHEA:10272"/>
        <dbReference type="ChEBI" id="CHEBI:15378"/>
        <dbReference type="ChEBI" id="CHEBI:17815"/>
        <dbReference type="ChEBI" id="CHEBI:30616"/>
        <dbReference type="ChEBI" id="CHEBI:58608"/>
        <dbReference type="ChEBI" id="CHEBI:456216"/>
        <dbReference type="EC" id="2.7.1.107"/>
    </reaction>
</comment>
<comment type="cofactor">
    <cofactor evidence="1">
        <name>Mg(2+)</name>
        <dbReference type="ChEBI" id="CHEBI:18420"/>
    </cofactor>
    <text evidence="1">Binds 1 Mg(2+) ion per subunit. This ion appears to have a structural role and is required for catalytic activity.</text>
</comment>
<comment type="subunit">
    <text evidence="1">Homodimer.</text>
</comment>
<comment type="similarity">
    <text evidence="3">Belongs to the diacylglycerol/lipid kinase family.</text>
</comment>
<evidence type="ECO:0000250" key="1">
    <source>
        <dbReference type="UniProtKB" id="Q6GFF9"/>
    </source>
</evidence>
<evidence type="ECO:0000255" key="2">
    <source>
        <dbReference type="PROSITE-ProRule" id="PRU00783"/>
    </source>
</evidence>
<evidence type="ECO:0000305" key="3"/>
<dbReference type="EC" id="2.7.1.107" evidence="1"/>
<dbReference type="EMBL" id="CP000703">
    <property type="protein sequence ID" value="ABQ49737.1"/>
    <property type="molecule type" value="Genomic_DNA"/>
</dbReference>
<dbReference type="RefSeq" id="WP_001231451.1">
    <property type="nucleotide sequence ID" value="NC_009487.1"/>
</dbReference>
<dbReference type="SMR" id="A5IU64"/>
<dbReference type="KEGG" id="saj:SaurJH9_1952"/>
<dbReference type="HOGENOM" id="CLU_045532_1_0_9"/>
<dbReference type="GO" id="GO:0005886">
    <property type="term" value="C:plasma membrane"/>
    <property type="evidence" value="ECO:0007669"/>
    <property type="project" value="TreeGrafter"/>
</dbReference>
<dbReference type="GO" id="GO:0005524">
    <property type="term" value="F:ATP binding"/>
    <property type="evidence" value="ECO:0007669"/>
    <property type="project" value="UniProtKB-KW"/>
</dbReference>
<dbReference type="GO" id="GO:0004143">
    <property type="term" value="F:ATP-dependent diacylglycerol kinase activity"/>
    <property type="evidence" value="ECO:0007669"/>
    <property type="project" value="UniProtKB-EC"/>
</dbReference>
<dbReference type="GO" id="GO:0046872">
    <property type="term" value="F:metal ion binding"/>
    <property type="evidence" value="ECO:0007669"/>
    <property type="project" value="UniProtKB-KW"/>
</dbReference>
<dbReference type="GO" id="GO:0008654">
    <property type="term" value="P:phospholipid biosynthetic process"/>
    <property type="evidence" value="ECO:0007669"/>
    <property type="project" value="UniProtKB-KW"/>
</dbReference>
<dbReference type="FunFam" id="2.60.200.40:FF:000015">
    <property type="entry name" value="Diacylglycerol kinase"/>
    <property type="match status" value="1"/>
</dbReference>
<dbReference type="FunFam" id="3.40.50.10330:FF:000008">
    <property type="entry name" value="Probable lipid kinase YegS"/>
    <property type="match status" value="1"/>
</dbReference>
<dbReference type="Gene3D" id="2.60.200.40">
    <property type="match status" value="1"/>
</dbReference>
<dbReference type="Gene3D" id="3.40.50.10330">
    <property type="entry name" value="Probable inorganic polyphosphate/atp-NAD kinase, domain 1"/>
    <property type="match status" value="1"/>
</dbReference>
<dbReference type="InterPro" id="IPR017438">
    <property type="entry name" value="ATP-NAD_kinase_N"/>
</dbReference>
<dbReference type="InterPro" id="IPR005218">
    <property type="entry name" value="Diacylglycerol/lipid_kinase"/>
</dbReference>
<dbReference type="InterPro" id="IPR001206">
    <property type="entry name" value="Diacylglycerol_kinase_cat_dom"/>
</dbReference>
<dbReference type="InterPro" id="IPR050187">
    <property type="entry name" value="Lipid_Phosphate_FormReg"/>
</dbReference>
<dbReference type="InterPro" id="IPR016064">
    <property type="entry name" value="NAD/diacylglycerol_kinase_sf"/>
</dbReference>
<dbReference type="InterPro" id="IPR045540">
    <property type="entry name" value="YegS/DAGK_C"/>
</dbReference>
<dbReference type="NCBIfam" id="NF009603">
    <property type="entry name" value="PRK13055.1"/>
    <property type="match status" value="1"/>
</dbReference>
<dbReference type="NCBIfam" id="NF009874">
    <property type="entry name" value="PRK13337.1"/>
    <property type="match status" value="1"/>
</dbReference>
<dbReference type="NCBIfam" id="TIGR00147">
    <property type="entry name" value="YegS/Rv2252/BmrU family lipid kinase"/>
    <property type="match status" value="1"/>
</dbReference>
<dbReference type="PANTHER" id="PTHR12358:SF106">
    <property type="entry name" value="LIPID KINASE YEGS"/>
    <property type="match status" value="1"/>
</dbReference>
<dbReference type="PANTHER" id="PTHR12358">
    <property type="entry name" value="SPHINGOSINE KINASE"/>
    <property type="match status" value="1"/>
</dbReference>
<dbReference type="Pfam" id="PF00781">
    <property type="entry name" value="DAGK_cat"/>
    <property type="match status" value="1"/>
</dbReference>
<dbReference type="Pfam" id="PF19279">
    <property type="entry name" value="YegS_C"/>
    <property type="match status" value="1"/>
</dbReference>
<dbReference type="SMART" id="SM00046">
    <property type="entry name" value="DAGKc"/>
    <property type="match status" value="1"/>
</dbReference>
<dbReference type="SUPFAM" id="SSF111331">
    <property type="entry name" value="NAD kinase/diacylglycerol kinase-like"/>
    <property type="match status" value="1"/>
</dbReference>
<dbReference type="PROSITE" id="PS50146">
    <property type="entry name" value="DAGK"/>
    <property type="match status" value="1"/>
</dbReference>
<accession>A5IU64</accession>
<organism>
    <name type="scientific">Staphylococcus aureus (strain JH9)</name>
    <dbReference type="NCBI Taxonomy" id="359786"/>
    <lineage>
        <taxon>Bacteria</taxon>
        <taxon>Bacillati</taxon>
        <taxon>Bacillota</taxon>
        <taxon>Bacilli</taxon>
        <taxon>Bacillales</taxon>
        <taxon>Staphylococcaceae</taxon>
        <taxon>Staphylococcus</taxon>
    </lineage>
</organism>
<keyword id="KW-0067">ATP-binding</keyword>
<keyword id="KW-0418">Kinase</keyword>
<keyword id="KW-0444">Lipid biosynthesis</keyword>
<keyword id="KW-0443">Lipid metabolism</keyword>
<keyword id="KW-0460">Magnesium</keyword>
<keyword id="KW-0479">Metal-binding</keyword>
<keyword id="KW-0547">Nucleotide-binding</keyword>
<keyword id="KW-0594">Phospholipid biosynthesis</keyword>
<keyword id="KW-1208">Phospholipid metabolism</keyword>
<keyword id="KW-0808">Transferase</keyword>
<proteinExistence type="inferred from homology"/>
<feature type="chain" id="PRO_0000386489" description="Diacylglycerol kinase">
    <location>
        <begin position="1"/>
        <end position="315"/>
    </location>
</feature>
<feature type="domain" description="DAGKc" evidence="2">
    <location>
        <begin position="1"/>
        <end position="132"/>
    </location>
</feature>
<feature type="active site" description="Proton acceptor" evidence="1">
    <location>
        <position position="273"/>
    </location>
</feature>
<feature type="binding site" evidence="2">
    <location>
        <begin position="10"/>
        <end position="14"/>
    </location>
    <ligand>
        <name>ATP</name>
        <dbReference type="ChEBI" id="CHEBI:30616"/>
    </ligand>
</feature>
<feature type="binding site" evidence="2">
    <location>
        <position position="41"/>
    </location>
    <ligand>
        <name>ATP</name>
        <dbReference type="ChEBI" id="CHEBI:30616"/>
    </ligand>
</feature>
<feature type="binding site" evidence="2">
    <location>
        <begin position="67"/>
        <end position="73"/>
    </location>
    <ligand>
        <name>ATP</name>
        <dbReference type="ChEBI" id="CHEBI:30616"/>
    </ligand>
</feature>
<feature type="binding site" evidence="2">
    <location>
        <position position="94"/>
    </location>
    <ligand>
        <name>ATP</name>
        <dbReference type="ChEBI" id="CHEBI:30616"/>
    </ligand>
</feature>
<feature type="binding site" evidence="1">
    <location>
        <position position="213"/>
    </location>
    <ligand>
        <name>Mg(2+)</name>
        <dbReference type="ChEBI" id="CHEBI:18420"/>
    </ligand>
</feature>
<feature type="binding site" evidence="1">
    <location>
        <position position="216"/>
    </location>
    <ligand>
        <name>Mg(2+)</name>
        <dbReference type="ChEBI" id="CHEBI:18420"/>
    </ligand>
</feature>
<feature type="binding site" evidence="1">
    <location>
        <position position="218"/>
    </location>
    <ligand>
        <name>Mg(2+)</name>
        <dbReference type="ChEBI" id="CHEBI:18420"/>
    </ligand>
</feature>
<gene>
    <name type="primary">dagK</name>
    <name type="ordered locus">SaurJH9_1952</name>
</gene>
<name>DAGK_STAA9</name>
<protein>
    <recommendedName>
        <fullName>Diacylglycerol kinase</fullName>
        <shortName>DAG kinase</shortName>
        <shortName>DAGK</shortName>
        <ecNumber evidence="1">2.7.1.107</ecNumber>
    </recommendedName>
</protein>
<reference key="1">
    <citation type="submission" date="2007-05" db="EMBL/GenBank/DDBJ databases">
        <title>Complete sequence of chromosome of Staphylococcus aureus subsp. aureus JH9.</title>
        <authorList>
            <consortium name="US DOE Joint Genome Institute"/>
            <person name="Copeland A."/>
            <person name="Lucas S."/>
            <person name="Lapidus A."/>
            <person name="Barry K."/>
            <person name="Detter J.C."/>
            <person name="Glavina del Rio T."/>
            <person name="Hammon N."/>
            <person name="Israni S."/>
            <person name="Pitluck S."/>
            <person name="Chain P."/>
            <person name="Malfatti S."/>
            <person name="Shin M."/>
            <person name="Vergez L."/>
            <person name="Schmutz J."/>
            <person name="Larimer F."/>
            <person name="Land M."/>
            <person name="Hauser L."/>
            <person name="Kyrpides N."/>
            <person name="Kim E."/>
            <person name="Tomasz A."/>
            <person name="Richardson P."/>
        </authorList>
    </citation>
    <scope>NUCLEOTIDE SEQUENCE [LARGE SCALE GENOMIC DNA]</scope>
    <source>
        <strain>JH9</strain>
    </source>
</reference>